<proteinExistence type="evidence at transcript level"/>
<accession>Q9LTC3</accession>
<gene>
    <name type="ordered locus">At3g23260</name>
    <name type="ORF">K14B15.17</name>
</gene>
<keyword id="KW-1185">Reference proteome</keyword>
<evidence type="ECO:0000255" key="1">
    <source>
        <dbReference type="PROSITE-ProRule" id="PRU00080"/>
    </source>
</evidence>
<reference key="1">
    <citation type="journal article" date="2000" name="DNA Res.">
        <title>Structural analysis of Arabidopsis thaliana chromosome 3. I. Sequence features of the regions of 4,504,864 bp covered by sixty P1 and TAC clones.</title>
        <authorList>
            <person name="Sato S."/>
            <person name="Nakamura Y."/>
            <person name="Kaneko T."/>
            <person name="Katoh T."/>
            <person name="Asamizu E."/>
            <person name="Tabata S."/>
        </authorList>
    </citation>
    <scope>NUCLEOTIDE SEQUENCE [LARGE SCALE GENOMIC DNA]</scope>
    <source>
        <strain>cv. Columbia</strain>
    </source>
</reference>
<reference key="2">
    <citation type="journal article" date="2017" name="Plant J.">
        <title>Araport11: a complete reannotation of the Arabidopsis thaliana reference genome.</title>
        <authorList>
            <person name="Cheng C.Y."/>
            <person name="Krishnakumar V."/>
            <person name="Chan A.P."/>
            <person name="Thibaud-Nissen F."/>
            <person name="Schobel S."/>
            <person name="Town C.D."/>
        </authorList>
    </citation>
    <scope>GENOME REANNOTATION</scope>
    <source>
        <strain>cv. Columbia</strain>
    </source>
</reference>
<reference key="3">
    <citation type="submission" date="2006-12" db="EMBL/GenBank/DDBJ databases">
        <title>Arabidopsis ORF clones.</title>
        <authorList>
            <person name="Bautista V.R."/>
            <person name="Kim C.J."/>
            <person name="Chen H."/>
            <person name="Quinitio C."/>
            <person name="Ecker J.R."/>
        </authorList>
    </citation>
    <scope>NUCLEOTIDE SEQUENCE [LARGE SCALE MRNA]</scope>
    <source>
        <strain>cv. Columbia</strain>
    </source>
</reference>
<sequence>MEWRSLPVELQEEILSRVPAKYLARLRSTSKQWNALSKTGSFAKKHSANATKEPLIIMLKDSRVYLASVNLHGVHNNVAQSFELGSRLYLKDPHISNVFHCDGLLLLCSIKENTLEVWNPCSGEAKLIKPRHSYYKESDFYALGYDNKSSCKKYKVLRVISQVHVQGDFKIEYEIYDFTNDSWRVHGATTELSIRQKHPVSVKGSTYWVVRNRYFPYKYFLSFDFSTERFQSLSLPQPFPYLVTDLSVVREEQLCLFGYYNWSTTSEDLNVWVTTSLGSVVSWSKFLTIQIIKPRVDMFDYGMSFLVDEQNKSLVCWISQKVLHIVGEIYHIQDLDDHGRDSALRSSCSVLMNYVPSLAQIQ</sequence>
<protein>
    <recommendedName>
        <fullName>Putative F-box protein At3g23260</fullName>
    </recommendedName>
</protein>
<organism>
    <name type="scientific">Arabidopsis thaliana</name>
    <name type="common">Mouse-ear cress</name>
    <dbReference type="NCBI Taxonomy" id="3702"/>
    <lineage>
        <taxon>Eukaryota</taxon>
        <taxon>Viridiplantae</taxon>
        <taxon>Streptophyta</taxon>
        <taxon>Embryophyta</taxon>
        <taxon>Tracheophyta</taxon>
        <taxon>Spermatophyta</taxon>
        <taxon>Magnoliopsida</taxon>
        <taxon>eudicotyledons</taxon>
        <taxon>Gunneridae</taxon>
        <taxon>Pentapetalae</taxon>
        <taxon>rosids</taxon>
        <taxon>malvids</taxon>
        <taxon>Brassicales</taxon>
        <taxon>Brassicaceae</taxon>
        <taxon>Camelineae</taxon>
        <taxon>Arabidopsis</taxon>
    </lineage>
</organism>
<feature type="chain" id="PRO_0000283449" description="Putative F-box protein At3g23260">
    <location>
        <begin position="1"/>
        <end position="362"/>
    </location>
</feature>
<feature type="domain" description="F-box" evidence="1">
    <location>
        <begin position="1"/>
        <end position="46"/>
    </location>
</feature>
<dbReference type="EMBL" id="AB025608">
    <property type="protein sequence ID" value="BAA95739.1"/>
    <property type="molecule type" value="Genomic_DNA"/>
</dbReference>
<dbReference type="EMBL" id="CP002686">
    <property type="protein sequence ID" value="AEE76744.1"/>
    <property type="molecule type" value="Genomic_DNA"/>
</dbReference>
<dbReference type="EMBL" id="BT029484">
    <property type="protein sequence ID" value="ABL66741.1"/>
    <property type="molecule type" value="mRNA"/>
</dbReference>
<dbReference type="RefSeq" id="NP_188967.1">
    <property type="nucleotide sequence ID" value="NM_113227.2"/>
</dbReference>
<dbReference type="SMR" id="Q9LTC3"/>
<dbReference type="FunCoup" id="Q9LTC3">
    <property type="interactions" value="4"/>
</dbReference>
<dbReference type="STRING" id="3702.Q9LTC3"/>
<dbReference type="PaxDb" id="3702-AT3G23260.1"/>
<dbReference type="ProteomicsDB" id="222381"/>
<dbReference type="DNASU" id="821905"/>
<dbReference type="EnsemblPlants" id="AT3G23260.1">
    <property type="protein sequence ID" value="AT3G23260.1"/>
    <property type="gene ID" value="AT3G23260"/>
</dbReference>
<dbReference type="GeneID" id="821905"/>
<dbReference type="Gramene" id="AT3G23260.1">
    <property type="protein sequence ID" value="AT3G23260.1"/>
    <property type="gene ID" value="AT3G23260"/>
</dbReference>
<dbReference type="KEGG" id="ath:AT3G23260"/>
<dbReference type="Araport" id="AT3G23260"/>
<dbReference type="TAIR" id="AT3G23260"/>
<dbReference type="HOGENOM" id="CLU_034692_1_0_1"/>
<dbReference type="InParanoid" id="Q9LTC3"/>
<dbReference type="OMA" id="DLTFQYE"/>
<dbReference type="OrthoDB" id="1867629at2759"/>
<dbReference type="PhylomeDB" id="Q9LTC3"/>
<dbReference type="PRO" id="PR:Q9LTC3"/>
<dbReference type="Proteomes" id="UP000006548">
    <property type="component" value="Chromosome 3"/>
</dbReference>
<dbReference type="ExpressionAtlas" id="Q9LTC3">
    <property type="expression patterns" value="baseline and differential"/>
</dbReference>
<dbReference type="CDD" id="cd22157">
    <property type="entry name" value="F-box_AtFBW1-like"/>
    <property type="match status" value="1"/>
</dbReference>
<dbReference type="Gene3D" id="1.20.1280.50">
    <property type="match status" value="1"/>
</dbReference>
<dbReference type="InterPro" id="IPR006527">
    <property type="entry name" value="F-box-assoc_dom_typ1"/>
</dbReference>
<dbReference type="InterPro" id="IPR017451">
    <property type="entry name" value="F-box-assoc_interact_dom"/>
</dbReference>
<dbReference type="InterPro" id="IPR036047">
    <property type="entry name" value="F-box-like_dom_sf"/>
</dbReference>
<dbReference type="InterPro" id="IPR001810">
    <property type="entry name" value="F-box_dom"/>
</dbReference>
<dbReference type="InterPro" id="IPR011043">
    <property type="entry name" value="Gal_Oxase/kelch_b-propeller"/>
</dbReference>
<dbReference type="InterPro" id="IPR050796">
    <property type="entry name" value="SCF_F-box_component"/>
</dbReference>
<dbReference type="NCBIfam" id="TIGR01640">
    <property type="entry name" value="F_box_assoc_1"/>
    <property type="match status" value="1"/>
</dbReference>
<dbReference type="PANTHER" id="PTHR31672">
    <property type="entry name" value="BNACNNG10540D PROTEIN"/>
    <property type="match status" value="1"/>
</dbReference>
<dbReference type="PANTHER" id="PTHR31672:SF13">
    <property type="entry name" value="F-BOX PROTEIN CPR30-LIKE"/>
    <property type="match status" value="1"/>
</dbReference>
<dbReference type="Pfam" id="PF00646">
    <property type="entry name" value="F-box"/>
    <property type="match status" value="1"/>
</dbReference>
<dbReference type="Pfam" id="PF07734">
    <property type="entry name" value="FBA_1"/>
    <property type="match status" value="1"/>
</dbReference>
<dbReference type="SMART" id="SM00256">
    <property type="entry name" value="FBOX"/>
    <property type="match status" value="1"/>
</dbReference>
<dbReference type="SUPFAM" id="SSF81383">
    <property type="entry name" value="F-box domain"/>
    <property type="match status" value="1"/>
</dbReference>
<dbReference type="SUPFAM" id="SSF50965">
    <property type="entry name" value="Galactose oxidase, central domain"/>
    <property type="match status" value="1"/>
</dbReference>
<dbReference type="PROSITE" id="PS50181">
    <property type="entry name" value="FBOX"/>
    <property type="match status" value="1"/>
</dbReference>
<name>FB179_ARATH</name>